<feature type="chain" id="PRO_0000152261" description="Putative arsenical pump-driving ATPase 2">
    <location>
        <begin position="1"/>
        <end position="299"/>
    </location>
</feature>
<feature type="binding site" evidence="2">
    <location>
        <begin position="8"/>
        <end position="15"/>
    </location>
    <ligand>
        <name>ATP</name>
        <dbReference type="ChEBI" id="CHEBI:30616"/>
    </ligand>
</feature>
<proteinExistence type="inferred from homology"/>
<evidence type="ECO:0000250" key="1"/>
<evidence type="ECO:0000255" key="2"/>
<evidence type="ECO:0000305" key="3"/>
<comment type="function">
    <text evidence="1">Anion-transporting ATPase. Catalyzes the extrusion of arsenite (By similarity).</text>
</comment>
<comment type="catalytic activity">
    <reaction>
        <text>arsenite(in) + ATP + H2O = arsenite(out) + ADP + phosphate + H(+)</text>
        <dbReference type="Rhea" id="RHEA:11348"/>
        <dbReference type="ChEBI" id="CHEBI:15377"/>
        <dbReference type="ChEBI" id="CHEBI:15378"/>
        <dbReference type="ChEBI" id="CHEBI:29242"/>
        <dbReference type="ChEBI" id="CHEBI:30616"/>
        <dbReference type="ChEBI" id="CHEBI:43474"/>
        <dbReference type="ChEBI" id="CHEBI:456216"/>
        <dbReference type="EC" id="7.3.2.7"/>
    </reaction>
</comment>
<comment type="similarity">
    <text evidence="3">Belongs to the arsA ATPase family.</text>
</comment>
<sequence>MRVFFFGGKGGVGKTTASSAFAVKLSEQGKKVLLLSTDPAHSLSDVFNTELQGETKLSENLTVKEIDLNEELKEYRSRVFKLAEATLRKETLRELEGIIHSLEESPGIEDVVIFEALSKEVVYRENEYDYIVVDTAPTGHTLGLLKTVRNLGNFLEEIVKLKEKVYELKKLSGKSVHEEALEYLKERKERFKKFSEIIYDKSYFFAVLTPEKLPFEETKRLVNSLKHYGIRVKALIINKVLPENPQDEFLKARKEVEKKFLKEIENYFMDIEKISIPYQKEEVVGYEKLKEFSKFLPLG</sequence>
<protein>
    <recommendedName>
        <fullName>Putative arsenical pump-driving ATPase 2</fullName>
        <ecNumber>7.3.2.7</ecNumber>
    </recommendedName>
    <alternativeName>
        <fullName>Arsenical resistance ATPase 2</fullName>
    </alternativeName>
    <alternativeName>
        <fullName>Arsenite-translocating ATPase 2</fullName>
    </alternativeName>
    <alternativeName>
        <fullName>Arsenite-transporting ATPase 2</fullName>
    </alternativeName>
</protein>
<dbReference type="EC" id="7.3.2.7"/>
<dbReference type="EMBL" id="AE000657">
    <property type="protein sequence ID" value="AAC06625.1"/>
    <property type="molecule type" value="Genomic_DNA"/>
</dbReference>
<dbReference type="PIR" id="F70330">
    <property type="entry name" value="F70330"/>
</dbReference>
<dbReference type="RefSeq" id="NP_213234.1">
    <property type="nucleotide sequence ID" value="NC_000918.1"/>
</dbReference>
<dbReference type="RefSeq" id="WP_010880172.1">
    <property type="nucleotide sequence ID" value="NC_000918.1"/>
</dbReference>
<dbReference type="SMR" id="O66674"/>
<dbReference type="STRING" id="224324.aq_343"/>
<dbReference type="EnsemblBacteria" id="AAC06625">
    <property type="protein sequence ID" value="AAC06625"/>
    <property type="gene ID" value="aq_343"/>
</dbReference>
<dbReference type="KEGG" id="aae:aq_343"/>
<dbReference type="PATRIC" id="fig|224324.8.peg.277"/>
<dbReference type="eggNOG" id="COG0003">
    <property type="taxonomic scope" value="Bacteria"/>
</dbReference>
<dbReference type="HOGENOM" id="CLU_040761_4_0_0"/>
<dbReference type="InParanoid" id="O66674"/>
<dbReference type="OrthoDB" id="9780677at2"/>
<dbReference type="Proteomes" id="UP000000798">
    <property type="component" value="Chromosome"/>
</dbReference>
<dbReference type="GO" id="GO:0005524">
    <property type="term" value="F:ATP binding"/>
    <property type="evidence" value="ECO:0007669"/>
    <property type="project" value="UniProtKB-KW"/>
</dbReference>
<dbReference type="GO" id="GO:0016887">
    <property type="term" value="F:ATP hydrolysis activity"/>
    <property type="evidence" value="ECO:0000318"/>
    <property type="project" value="GO_Central"/>
</dbReference>
<dbReference type="GO" id="GO:0015446">
    <property type="term" value="F:ATPase-coupled arsenite transmembrane transporter activity"/>
    <property type="evidence" value="ECO:0007669"/>
    <property type="project" value="UniProtKB-EC"/>
</dbReference>
<dbReference type="CDD" id="cd02035">
    <property type="entry name" value="ArsA"/>
    <property type="match status" value="1"/>
</dbReference>
<dbReference type="Gene3D" id="3.40.50.300">
    <property type="entry name" value="P-loop containing nucleotide triphosphate hydrolases"/>
    <property type="match status" value="1"/>
</dbReference>
<dbReference type="InterPro" id="IPR025723">
    <property type="entry name" value="Anion-transp_ATPase-like_dom"/>
</dbReference>
<dbReference type="InterPro" id="IPR016300">
    <property type="entry name" value="ATPase_ArsA/GET3"/>
</dbReference>
<dbReference type="InterPro" id="IPR027417">
    <property type="entry name" value="P-loop_NTPase"/>
</dbReference>
<dbReference type="NCBIfam" id="TIGR00345">
    <property type="entry name" value="GET3_arsA_TRC40"/>
    <property type="match status" value="1"/>
</dbReference>
<dbReference type="PANTHER" id="PTHR10803">
    <property type="entry name" value="ARSENICAL PUMP-DRIVING ATPASE ARSENITE-TRANSLOCATING ATPASE"/>
    <property type="match status" value="1"/>
</dbReference>
<dbReference type="PANTHER" id="PTHR10803:SF3">
    <property type="entry name" value="ATPASE GET3"/>
    <property type="match status" value="1"/>
</dbReference>
<dbReference type="Pfam" id="PF02374">
    <property type="entry name" value="ArsA_ATPase"/>
    <property type="match status" value="1"/>
</dbReference>
<dbReference type="SUPFAM" id="SSF52540">
    <property type="entry name" value="P-loop containing nucleoside triphosphate hydrolases"/>
    <property type="match status" value="1"/>
</dbReference>
<name>ARSA2_AQUAE</name>
<accession>O66674</accession>
<gene>
    <name type="primary">arsA2</name>
    <name type="ordered locus">aq_343</name>
</gene>
<organism>
    <name type="scientific">Aquifex aeolicus (strain VF5)</name>
    <dbReference type="NCBI Taxonomy" id="224324"/>
    <lineage>
        <taxon>Bacteria</taxon>
        <taxon>Pseudomonadati</taxon>
        <taxon>Aquificota</taxon>
        <taxon>Aquificia</taxon>
        <taxon>Aquificales</taxon>
        <taxon>Aquificaceae</taxon>
        <taxon>Aquifex</taxon>
    </lineage>
</organism>
<keyword id="KW-0059">Arsenical resistance</keyword>
<keyword id="KW-0067">ATP-binding</keyword>
<keyword id="KW-0547">Nucleotide-binding</keyword>
<keyword id="KW-1185">Reference proteome</keyword>
<keyword id="KW-1278">Translocase</keyword>
<reference key="1">
    <citation type="journal article" date="1998" name="Nature">
        <title>The complete genome of the hyperthermophilic bacterium Aquifex aeolicus.</title>
        <authorList>
            <person name="Deckert G."/>
            <person name="Warren P.V."/>
            <person name="Gaasterland T."/>
            <person name="Young W.G."/>
            <person name="Lenox A.L."/>
            <person name="Graham D.E."/>
            <person name="Overbeek R."/>
            <person name="Snead M.A."/>
            <person name="Keller M."/>
            <person name="Aujay M."/>
            <person name="Huber R."/>
            <person name="Feldman R.A."/>
            <person name="Short J.M."/>
            <person name="Olsen G.J."/>
            <person name="Swanson R.V."/>
        </authorList>
    </citation>
    <scope>NUCLEOTIDE SEQUENCE [LARGE SCALE GENOMIC DNA]</scope>
    <source>
        <strain>VF5</strain>
    </source>
</reference>